<accession>Q3AGD3</accession>
<proteinExistence type="inferred from homology"/>
<protein>
    <recommendedName>
        <fullName evidence="1">Urease accessory protein UreD</fullName>
    </recommendedName>
</protein>
<keyword id="KW-0143">Chaperone</keyword>
<keyword id="KW-0963">Cytoplasm</keyword>
<keyword id="KW-0996">Nickel insertion</keyword>
<reference key="1">
    <citation type="submission" date="2005-07" db="EMBL/GenBank/DDBJ databases">
        <title>Complete sequence of Synechococcus sp. CC9605.</title>
        <authorList>
            <consortium name="US DOE Joint Genome Institute"/>
            <person name="Copeland A."/>
            <person name="Lucas S."/>
            <person name="Lapidus A."/>
            <person name="Barry K."/>
            <person name="Detter J.C."/>
            <person name="Glavina T."/>
            <person name="Hammon N."/>
            <person name="Israni S."/>
            <person name="Pitluck S."/>
            <person name="Schmutz J."/>
            <person name="Martinez M."/>
            <person name="Larimer F."/>
            <person name="Land M."/>
            <person name="Kyrpides N."/>
            <person name="Ivanova N."/>
            <person name="Richardson P."/>
        </authorList>
    </citation>
    <scope>NUCLEOTIDE SEQUENCE [LARGE SCALE GENOMIC DNA]</scope>
    <source>
        <strain>CC9605</strain>
    </source>
</reference>
<organism>
    <name type="scientific">Synechococcus sp. (strain CC9605)</name>
    <dbReference type="NCBI Taxonomy" id="110662"/>
    <lineage>
        <taxon>Bacteria</taxon>
        <taxon>Bacillati</taxon>
        <taxon>Cyanobacteriota</taxon>
        <taxon>Cyanophyceae</taxon>
        <taxon>Synechococcales</taxon>
        <taxon>Synechococcaceae</taxon>
        <taxon>Synechococcus</taxon>
    </lineage>
</organism>
<feature type="chain" id="PRO_0000340524" description="Urease accessory protein UreD">
    <location>
        <begin position="1"/>
        <end position="311"/>
    </location>
</feature>
<evidence type="ECO:0000255" key="1">
    <source>
        <dbReference type="HAMAP-Rule" id="MF_01384"/>
    </source>
</evidence>
<evidence type="ECO:0000305" key="2"/>
<gene>
    <name evidence="1" type="primary">ureD</name>
    <name type="ordered locus">Syncc9605_2624</name>
</gene>
<sequence>MQRLDPWHGRCDLQFHATNGSTKHQGGCTAPFKLLRSERGEDGRCELPVLHTAGGLVGGDQLSLDFKLEANSRGLITSVAAQKVYGSIGRSRLQPEGCFAHQQVRCSLASGSDLEWLPQELVLYADALFEQQLTVTLPQDASFLSAEIVRLGRTAAGETLQQGRWRSSLTIQRLAGESSTWELADRVELGGASLESPHGLGGAPVFGTLVWAAPMAMGAETTASVLEGARADREGLTGTMRCGALNQGLIARYSGESSRDARFWFSRIWERTRTIRGLTRPRIPRVWPLQEQPLRRQTSTVNAFEAAAETH</sequence>
<name>URED_SYNSC</name>
<dbReference type="EMBL" id="CP000110">
    <property type="protein sequence ID" value="ABB36349.1"/>
    <property type="status" value="ALT_INIT"/>
    <property type="molecule type" value="Genomic_DNA"/>
</dbReference>
<dbReference type="RefSeq" id="WP_041435898.1">
    <property type="nucleotide sequence ID" value="NC_007516.1"/>
</dbReference>
<dbReference type="SMR" id="Q3AGD3"/>
<dbReference type="STRING" id="110662.Syncc9605_2624"/>
<dbReference type="KEGG" id="syd:Syncc9605_2624"/>
<dbReference type="eggNOG" id="COG0829">
    <property type="taxonomic scope" value="Bacteria"/>
</dbReference>
<dbReference type="HOGENOM" id="CLU_056339_4_0_3"/>
<dbReference type="OrthoDB" id="9798842at2"/>
<dbReference type="GO" id="GO:0005737">
    <property type="term" value="C:cytoplasm"/>
    <property type="evidence" value="ECO:0007669"/>
    <property type="project" value="UniProtKB-SubCell"/>
</dbReference>
<dbReference type="GO" id="GO:0016151">
    <property type="term" value="F:nickel cation binding"/>
    <property type="evidence" value="ECO:0007669"/>
    <property type="project" value="UniProtKB-UniRule"/>
</dbReference>
<dbReference type="HAMAP" id="MF_01384">
    <property type="entry name" value="UreD"/>
    <property type="match status" value="1"/>
</dbReference>
<dbReference type="InterPro" id="IPR002669">
    <property type="entry name" value="UreD"/>
</dbReference>
<dbReference type="PANTHER" id="PTHR33643">
    <property type="entry name" value="UREASE ACCESSORY PROTEIN D"/>
    <property type="match status" value="1"/>
</dbReference>
<dbReference type="PANTHER" id="PTHR33643:SF1">
    <property type="entry name" value="UREASE ACCESSORY PROTEIN D"/>
    <property type="match status" value="1"/>
</dbReference>
<dbReference type="Pfam" id="PF01774">
    <property type="entry name" value="UreD"/>
    <property type="match status" value="1"/>
</dbReference>
<comment type="function">
    <text evidence="1">Required for maturation of urease via the functional incorporation of the urease nickel metallocenter.</text>
</comment>
<comment type="subunit">
    <text evidence="1">UreD, UreF and UreG form a complex that acts as a GTP-hydrolysis-dependent molecular chaperone, activating the urease apoprotein by helping to assemble the nickel containing metallocenter of UreC. The UreE protein probably delivers the nickel.</text>
</comment>
<comment type="subcellular location">
    <subcellularLocation>
        <location evidence="1">Cytoplasm</location>
    </subcellularLocation>
</comment>
<comment type="similarity">
    <text evidence="1">Belongs to the UreD family.</text>
</comment>
<comment type="sequence caution" evidence="2">
    <conflict type="erroneous initiation">
        <sequence resource="EMBL-CDS" id="ABB36349"/>
    </conflict>
</comment>